<name>PETM_RIPO1</name>
<gene>
    <name evidence="1" type="primary">petM</name>
    <name type="ordered locus">PCC8801_3576</name>
</gene>
<dbReference type="EMBL" id="CP001287">
    <property type="protein sequence ID" value="ACK67539.1"/>
    <property type="molecule type" value="Genomic_DNA"/>
</dbReference>
<dbReference type="RefSeq" id="WP_012596797.1">
    <property type="nucleotide sequence ID" value="NC_011726.1"/>
</dbReference>
<dbReference type="SMR" id="B7K1J7"/>
<dbReference type="STRING" id="41431.PCC8801_3576"/>
<dbReference type="KEGG" id="cyp:PCC8801_3576"/>
<dbReference type="eggNOG" id="ENOG5033D32">
    <property type="taxonomic scope" value="Bacteria"/>
</dbReference>
<dbReference type="HOGENOM" id="CLU_216743_0_0_3"/>
<dbReference type="Proteomes" id="UP000008204">
    <property type="component" value="Chromosome"/>
</dbReference>
<dbReference type="GO" id="GO:0009512">
    <property type="term" value="C:cytochrome b6f complex"/>
    <property type="evidence" value="ECO:0007669"/>
    <property type="project" value="InterPro"/>
</dbReference>
<dbReference type="GO" id="GO:0031676">
    <property type="term" value="C:plasma membrane-derived thylakoid membrane"/>
    <property type="evidence" value="ECO:0007669"/>
    <property type="project" value="UniProtKB-SubCell"/>
</dbReference>
<dbReference type="GO" id="GO:0009055">
    <property type="term" value="F:electron transfer activity"/>
    <property type="evidence" value="ECO:0007669"/>
    <property type="project" value="UniProtKB-UniRule"/>
</dbReference>
<dbReference type="GO" id="GO:0015979">
    <property type="term" value="P:photosynthesis"/>
    <property type="evidence" value="ECO:0007669"/>
    <property type="project" value="UniProtKB-KW"/>
</dbReference>
<dbReference type="HAMAP" id="MF_00396">
    <property type="entry name" value="Cytb6_f_PetM"/>
    <property type="match status" value="1"/>
</dbReference>
<dbReference type="InterPro" id="IPR012595">
    <property type="entry name" value="PetM_cyt_b6/f_cplx_su7"/>
</dbReference>
<dbReference type="Pfam" id="PF08041">
    <property type="entry name" value="PetM"/>
    <property type="match status" value="1"/>
</dbReference>
<dbReference type="SUPFAM" id="SSF103441">
    <property type="entry name" value="PetM subunit of the cytochrome b6f complex"/>
    <property type="match status" value="1"/>
</dbReference>
<reference key="1">
    <citation type="journal article" date="2011" name="MBio">
        <title>Novel metabolic attributes of the genus Cyanothece, comprising a group of unicellular nitrogen-fixing Cyanobacteria.</title>
        <authorList>
            <person name="Bandyopadhyay A."/>
            <person name="Elvitigala T."/>
            <person name="Welsh E."/>
            <person name="Stockel J."/>
            <person name="Liberton M."/>
            <person name="Min H."/>
            <person name="Sherman L.A."/>
            <person name="Pakrasi H.B."/>
        </authorList>
    </citation>
    <scope>NUCLEOTIDE SEQUENCE [LARGE SCALE GENOMIC DNA]</scope>
    <source>
        <strain>PCC 8801 / RF-1</strain>
    </source>
</reference>
<sequence>MTAESMMFNGAVLLMVLVLVGLAWGFLLLKIQGGEAE</sequence>
<accession>B7K1J7</accession>
<keyword id="KW-0249">Electron transport</keyword>
<keyword id="KW-0472">Membrane</keyword>
<keyword id="KW-0602">Photosynthesis</keyword>
<keyword id="KW-1185">Reference proteome</keyword>
<keyword id="KW-0793">Thylakoid</keyword>
<keyword id="KW-0812">Transmembrane</keyword>
<keyword id="KW-1133">Transmembrane helix</keyword>
<keyword id="KW-0813">Transport</keyword>
<feature type="chain" id="PRO_1000192349" description="Cytochrome b6-f complex subunit 7">
    <location>
        <begin position="1"/>
        <end position="37"/>
    </location>
</feature>
<feature type="transmembrane region" description="Helical" evidence="1">
    <location>
        <begin position="11"/>
        <end position="29"/>
    </location>
</feature>
<comment type="function">
    <text evidence="1">Component of the cytochrome b6-f complex, which mediates electron transfer between photosystem II (PSII) and photosystem I (PSI), cyclic electron flow around PSI, and state transitions.</text>
</comment>
<comment type="subunit">
    <text evidence="1">The 4 large subunits of the cytochrome b6-f complex are cytochrome b6, subunit IV (17 kDa polypeptide, PetD), cytochrome f and the Rieske protein, while the 4 small subunits are PetG, PetL, PetM and PetN. The complex functions as a dimer.</text>
</comment>
<comment type="subcellular location">
    <subcellularLocation>
        <location evidence="1">Cellular thylakoid membrane</location>
        <topology evidence="1">Single-pass membrane protein</topology>
    </subcellularLocation>
</comment>
<comment type="similarity">
    <text evidence="1">Belongs to the PetM family.</text>
</comment>
<evidence type="ECO:0000255" key="1">
    <source>
        <dbReference type="HAMAP-Rule" id="MF_00396"/>
    </source>
</evidence>
<protein>
    <recommendedName>
        <fullName evidence="1">Cytochrome b6-f complex subunit 7</fullName>
    </recommendedName>
    <alternativeName>
        <fullName evidence="1">Cytochrome b6-f complex subunit PetM</fullName>
    </alternativeName>
    <alternativeName>
        <fullName evidence="1">Cytochrome b6-f complex subunit VII</fullName>
    </alternativeName>
</protein>
<organism>
    <name type="scientific">Rippkaea orientalis (strain PCC 8801 / RF-1)</name>
    <name type="common">Cyanothece sp. (strain PCC 8801)</name>
    <dbReference type="NCBI Taxonomy" id="41431"/>
    <lineage>
        <taxon>Bacteria</taxon>
        <taxon>Bacillati</taxon>
        <taxon>Cyanobacteriota</taxon>
        <taxon>Cyanophyceae</taxon>
        <taxon>Oscillatoriophycideae</taxon>
        <taxon>Chroococcales</taxon>
        <taxon>Aphanothecaceae</taxon>
        <taxon>Rippkaea</taxon>
        <taxon>Rippkaea orientalis</taxon>
    </lineage>
</organism>
<proteinExistence type="inferred from homology"/>